<keyword id="KW-0075">B-cell activation</keyword>
<keyword id="KW-0202">Cytokine</keyword>
<keyword id="KW-1015">Disulfide bond</keyword>
<keyword id="KW-0325">Glycoprotein</keyword>
<keyword id="KW-0339">Growth factor</keyword>
<keyword id="KW-1185">Reference proteome</keyword>
<keyword id="KW-0964">Secreted</keyword>
<keyword id="KW-0732">Signal</keyword>
<comment type="function">
    <text evidence="2">Participates in at least several B-cell activation processes as well as of other cell types. It is a costimulator of DNA-synthesis. It induces the expression of class II MHC molecules on resting B-cells. It enhances both secretion and cell surface expression of IgE and IgG1. It also regulates the expression of the low affinity Fc receptor for IgE (CD23) on both lymphocytes and monocytes. Positively regulates IL31RA expression in macrophages. Stimulates autophagy in dendritic cells by interfering with mTORC1 signaling and through the induction of RUFY4.</text>
</comment>
<comment type="subcellular location">
    <subcellularLocation>
        <location>Secreted</location>
    </subcellularLocation>
</comment>
<comment type="similarity">
    <text evidence="4">Belongs to the IL-4/IL-13 family.</text>
</comment>
<dbReference type="EMBL" id="L06010">
    <property type="protein sequence ID" value="AAA21299.1"/>
    <property type="molecule type" value="mRNA"/>
</dbReference>
<dbReference type="EMBL" id="AF035404">
    <property type="protein sequence ID" value="AAB87701.1"/>
    <property type="molecule type" value="mRNA"/>
</dbReference>
<dbReference type="EMBL" id="AF305617">
    <property type="protein sequence ID" value="AAG21896.1"/>
    <property type="molecule type" value="mRNA"/>
</dbReference>
<dbReference type="RefSeq" id="NP_001075988.1">
    <property type="nucleotide sequence ID" value="NM_001082519.1"/>
</dbReference>
<dbReference type="SMR" id="P42202"/>
<dbReference type="FunCoup" id="P42202">
    <property type="interactions" value="738"/>
</dbReference>
<dbReference type="STRING" id="9796.ENSECAP00000006431"/>
<dbReference type="GlyCosmos" id="P42202">
    <property type="glycosylation" value="2 sites, No reported glycans"/>
</dbReference>
<dbReference type="PaxDb" id="9796-ENSECAP00000006431"/>
<dbReference type="GeneID" id="100034225"/>
<dbReference type="KEGG" id="ecb:100034225"/>
<dbReference type="CTD" id="3565"/>
<dbReference type="InParanoid" id="P42202"/>
<dbReference type="OrthoDB" id="9528087at2759"/>
<dbReference type="Proteomes" id="UP000002281">
    <property type="component" value="Unplaced"/>
</dbReference>
<dbReference type="GO" id="GO:0005615">
    <property type="term" value="C:extracellular space"/>
    <property type="evidence" value="ECO:0007669"/>
    <property type="project" value="UniProtKB-KW"/>
</dbReference>
<dbReference type="GO" id="GO:0005125">
    <property type="term" value="F:cytokine activity"/>
    <property type="evidence" value="ECO:0007669"/>
    <property type="project" value="UniProtKB-KW"/>
</dbReference>
<dbReference type="GO" id="GO:0008083">
    <property type="term" value="F:growth factor activity"/>
    <property type="evidence" value="ECO:0007669"/>
    <property type="project" value="UniProtKB-KW"/>
</dbReference>
<dbReference type="GO" id="GO:0005136">
    <property type="term" value="F:interleukin-4 receptor binding"/>
    <property type="evidence" value="ECO:0007669"/>
    <property type="project" value="InterPro"/>
</dbReference>
<dbReference type="GO" id="GO:0042113">
    <property type="term" value="P:B cell activation"/>
    <property type="evidence" value="ECO:0007669"/>
    <property type="project" value="UniProtKB-KW"/>
</dbReference>
<dbReference type="GO" id="GO:0006955">
    <property type="term" value="P:immune response"/>
    <property type="evidence" value="ECO:0007669"/>
    <property type="project" value="InterPro"/>
</dbReference>
<dbReference type="GO" id="GO:0035771">
    <property type="term" value="P:interleukin-4-mediated signaling pathway"/>
    <property type="evidence" value="ECO:0000318"/>
    <property type="project" value="GO_Central"/>
</dbReference>
<dbReference type="GO" id="GO:0050728">
    <property type="term" value="P:negative regulation of inflammatory response"/>
    <property type="evidence" value="ECO:0000318"/>
    <property type="project" value="GO_Central"/>
</dbReference>
<dbReference type="GO" id="GO:0045893">
    <property type="term" value="P:positive regulation of DNA-templated transcription"/>
    <property type="evidence" value="ECO:0000318"/>
    <property type="project" value="GO_Central"/>
</dbReference>
<dbReference type="GO" id="GO:0016239">
    <property type="term" value="P:positive regulation of macroautophagy"/>
    <property type="evidence" value="ECO:0000250"/>
    <property type="project" value="UniProtKB"/>
</dbReference>
<dbReference type="GO" id="GO:0050776">
    <property type="term" value="P:regulation of immune response"/>
    <property type="evidence" value="ECO:0000318"/>
    <property type="project" value="GO_Central"/>
</dbReference>
<dbReference type="Gene3D" id="1.20.1250.10">
    <property type="match status" value="1"/>
</dbReference>
<dbReference type="InterPro" id="IPR009079">
    <property type="entry name" value="4_helix_cytokine-like_core"/>
</dbReference>
<dbReference type="InterPro" id="IPR002354">
    <property type="entry name" value="IL-4"/>
</dbReference>
<dbReference type="InterPro" id="IPR001325">
    <property type="entry name" value="IL-4/IL-13"/>
</dbReference>
<dbReference type="InterPro" id="IPR018096">
    <property type="entry name" value="IL-4/IL-13_CS"/>
</dbReference>
<dbReference type="PANTHER" id="PTHR47401">
    <property type="entry name" value="INTERLEUKIN-4"/>
    <property type="match status" value="1"/>
</dbReference>
<dbReference type="PANTHER" id="PTHR47401:SF1">
    <property type="entry name" value="INTERLEUKIN-4"/>
    <property type="match status" value="1"/>
</dbReference>
<dbReference type="Pfam" id="PF00727">
    <property type="entry name" value="IL4"/>
    <property type="match status" value="1"/>
</dbReference>
<dbReference type="PIRSF" id="PIRSF001941">
    <property type="entry name" value="Interleukin_4"/>
    <property type="match status" value="1"/>
</dbReference>
<dbReference type="PRINTS" id="PR00431">
    <property type="entry name" value="INTERLEUKIN4"/>
</dbReference>
<dbReference type="SMART" id="SM00190">
    <property type="entry name" value="IL4_13"/>
    <property type="match status" value="1"/>
</dbReference>
<dbReference type="SUPFAM" id="SSF47266">
    <property type="entry name" value="4-helical cytokines"/>
    <property type="match status" value="1"/>
</dbReference>
<dbReference type="PROSITE" id="PS00838">
    <property type="entry name" value="INTERLEUKIN_4_13"/>
    <property type="match status" value="1"/>
</dbReference>
<proteinExistence type="evidence at transcript level"/>
<accession>P42202</accession>
<accession>O46393</accession>
<accession>Q9GL85</accession>
<protein>
    <recommendedName>
        <fullName>Interleukin-4</fullName>
        <shortName>IL-4</shortName>
    </recommendedName>
    <alternativeName>
        <fullName>B-cell stimulatory factor 1</fullName>
        <shortName>BSF-1</shortName>
    </alternativeName>
    <alternativeName>
        <fullName>Lymphocyte stimulatory factor 1</fullName>
    </alternativeName>
</protein>
<name>IL4_HORSE</name>
<feature type="signal peptide" evidence="1">
    <location>
        <begin position="1"/>
        <end position="23"/>
    </location>
</feature>
<feature type="chain" id="PRO_0000015531" description="Interleukin-4">
    <location>
        <begin position="24"/>
        <end position="134"/>
    </location>
</feature>
<feature type="glycosylation site" description="N-linked (GlcNAc...) asparagine" evidence="3">
    <location>
        <position position="38"/>
    </location>
</feature>
<feature type="glycosylation site" description="N-linked (GlcNAc...) asparagine" evidence="3">
    <location>
        <position position="101"/>
    </location>
</feature>
<feature type="disulfide bond" evidence="1">
    <location>
        <begin position="24"/>
        <end position="133"/>
    </location>
</feature>
<feature type="disulfide bond" evidence="1">
    <location>
        <begin position="48"/>
        <end position="88"/>
    </location>
</feature>
<feature type="sequence conflict" description="In Ref. 1; AAA21299." evidence="4" ref="1">
    <original>Y</original>
    <variation>S</variation>
    <location>
        <position position="5"/>
    </location>
</feature>
<feature type="sequence conflict" description="In Ref. 3; AAG21896." evidence="4" ref="3">
    <original>L</original>
    <variation>I</variation>
    <location>
        <position position="8"/>
    </location>
</feature>
<feature type="sequence conflict" description="In Ref. 3; AAG21896." evidence="4" ref="3">
    <original>S</original>
    <variation>SN</variation>
    <location>
        <position position="19"/>
    </location>
</feature>
<feature type="sequence conflict" description="In Ref. 2; AAB87701." evidence="4" ref="2">
    <original>K</original>
    <variation>I</variation>
    <location>
        <position position="25"/>
    </location>
</feature>
<feature type="sequence conflict" description="In Ref. 2; AAB87701." evidence="4" ref="2">
    <original>K</original>
    <variation>I</variation>
    <location>
        <position position="35"/>
    </location>
</feature>
<feature type="sequence conflict" description="In Ref. 3; AAG21896." evidence="4" ref="3">
    <original>N</original>
    <variation>NN</variation>
    <location>
        <position position="38"/>
    </location>
</feature>
<feature type="sequence conflict" description="In Ref. 3." evidence="4" ref="3">
    <original>G</original>
    <variation>AG</variation>
    <location>
        <position position="58"/>
    </location>
</feature>
<feature type="sequence conflict" description="In Ref. 3; AAG21896." evidence="4" ref="3">
    <original>Q</original>
    <variation>QL</variation>
    <location>
        <position position="76"/>
    </location>
</feature>
<feature type="sequence conflict" description="In Ref. 1; AAA21299." evidence="4" ref="1">
    <location>
        <position position="96"/>
    </location>
</feature>
<feature type="sequence conflict" description="In Ref. 1; AAA21299." evidence="4" ref="1">
    <location>
        <position position="116"/>
    </location>
</feature>
<feature type="sequence conflict" description="In Ref. 1; AAA21299." evidence="4" ref="1">
    <original>K</original>
    <variation>R</variation>
    <location>
        <position position="127"/>
    </location>
</feature>
<sequence>MGLTYQLLPALVCLLACTSFIQGCKYDITLQEIIKTLNLTDGKGKNSCMELTVADAFGPKNTDGKEICRAAKVLQQYKRHDRSLIKECLSGLDRNLKGMANGTCCTVNEAKKSTLKDFLERLKTIMKEKYSKCS</sequence>
<evidence type="ECO:0000250" key="1"/>
<evidence type="ECO:0000250" key="2">
    <source>
        <dbReference type="UniProtKB" id="P07750"/>
    </source>
</evidence>
<evidence type="ECO:0000255" key="3"/>
<evidence type="ECO:0000305" key="4"/>
<reference key="1">
    <citation type="journal article" date="1994" name="Vet. Immunol. Immunopathol.">
        <title>Molecular cloning and sequencing of equine interleukin 4.</title>
        <authorList>
            <person name="Vandergrifft E.V."/>
            <person name="Swiderski C.E."/>
            <person name="Horohov D.W."/>
        </authorList>
    </citation>
    <scope>NUCLEOTIDE SEQUENCE [MRNA]</scope>
</reference>
<reference key="2">
    <citation type="submission" date="1997-11" db="EMBL/GenBank/DDBJ databases">
        <title>Horse (Equus caballus) interleukin-4 gene.</title>
        <authorList>
            <person name="Schrenzel M.D."/>
            <person name="Stannard A.A."/>
            <person name="Daft B."/>
            <person name="Ferrick D.A."/>
        </authorList>
    </citation>
    <scope>NUCLEOTIDE SEQUENCE [MRNA]</scope>
</reference>
<reference key="3">
    <citation type="submission" date="2000-09" db="EMBL/GenBank/DDBJ databases">
        <title>Cloning of equine interleukin 4 (IL-4).</title>
        <authorList>
            <person name="Steinbach F."/>
            <person name="Mauel S."/>
        </authorList>
    </citation>
    <scope>NUCLEOTIDE SEQUENCE [MRNA]</scope>
</reference>
<organism>
    <name type="scientific">Equus caballus</name>
    <name type="common">Horse</name>
    <dbReference type="NCBI Taxonomy" id="9796"/>
    <lineage>
        <taxon>Eukaryota</taxon>
        <taxon>Metazoa</taxon>
        <taxon>Chordata</taxon>
        <taxon>Craniata</taxon>
        <taxon>Vertebrata</taxon>
        <taxon>Euteleostomi</taxon>
        <taxon>Mammalia</taxon>
        <taxon>Eutheria</taxon>
        <taxon>Laurasiatheria</taxon>
        <taxon>Perissodactyla</taxon>
        <taxon>Equidae</taxon>
        <taxon>Equus</taxon>
    </lineage>
</organism>
<gene>
    <name type="primary">IL4</name>
</gene>